<accession>Q5PLB0</accession>
<name>IF2_SALPA</name>
<gene>
    <name evidence="2" type="primary">infB</name>
    <name type="ordered locus">SPA3154</name>
</gene>
<reference key="1">
    <citation type="journal article" date="2004" name="Nat. Genet.">
        <title>Comparison of genome degradation in Paratyphi A and Typhi, human-restricted serovars of Salmonella enterica that cause typhoid.</title>
        <authorList>
            <person name="McClelland M."/>
            <person name="Sanderson K.E."/>
            <person name="Clifton S.W."/>
            <person name="Latreille P."/>
            <person name="Porwollik S."/>
            <person name="Sabo A."/>
            <person name="Meyer R."/>
            <person name="Bieri T."/>
            <person name="Ozersky P."/>
            <person name="McLellan M."/>
            <person name="Harkins C.R."/>
            <person name="Wang C."/>
            <person name="Nguyen C."/>
            <person name="Berghoff A."/>
            <person name="Elliott G."/>
            <person name="Kohlberg S."/>
            <person name="Strong C."/>
            <person name="Du F."/>
            <person name="Carter J."/>
            <person name="Kremizki C."/>
            <person name="Layman D."/>
            <person name="Leonard S."/>
            <person name="Sun H."/>
            <person name="Fulton L."/>
            <person name="Nash W."/>
            <person name="Miner T."/>
            <person name="Minx P."/>
            <person name="Delehaunty K."/>
            <person name="Fronick C."/>
            <person name="Magrini V."/>
            <person name="Nhan M."/>
            <person name="Warren W."/>
            <person name="Florea L."/>
            <person name="Spieth J."/>
            <person name="Wilson R.K."/>
        </authorList>
    </citation>
    <scope>NUCLEOTIDE SEQUENCE [LARGE SCALE GENOMIC DNA]</scope>
    <source>
        <strain>ATCC 9150 / SARB42</strain>
    </source>
</reference>
<keyword id="KW-0963">Cytoplasm</keyword>
<keyword id="KW-0342">GTP-binding</keyword>
<keyword id="KW-0396">Initiation factor</keyword>
<keyword id="KW-0547">Nucleotide-binding</keyword>
<keyword id="KW-0648">Protein biosynthesis</keyword>
<protein>
    <recommendedName>
        <fullName evidence="2">Translation initiation factor IF-2</fullName>
    </recommendedName>
</protein>
<organism>
    <name type="scientific">Salmonella paratyphi A (strain ATCC 9150 / SARB42)</name>
    <dbReference type="NCBI Taxonomy" id="295319"/>
    <lineage>
        <taxon>Bacteria</taxon>
        <taxon>Pseudomonadati</taxon>
        <taxon>Pseudomonadota</taxon>
        <taxon>Gammaproteobacteria</taxon>
        <taxon>Enterobacterales</taxon>
        <taxon>Enterobacteriaceae</taxon>
        <taxon>Salmonella</taxon>
    </lineage>
</organism>
<sequence>MTDLTLKALAAERQVSVDRLVQQFADAGIRKSADDSVSAQEKQTLLAHLNREAVSGPDKLTLQRKTRSTLNIPGTGGKSKSVQIEVRKKRTFVKRDPQEAERLAAEEQAQREAEEQARREAEEQAKREAQQKAEREAAEQAKREAAEKAKREAAEKDKVSNQQTDDMTKTAQAEKARRENEAAELKRKAEEEARRKLEEEARRVAEEARRMAEENKWTATPEPVEDTSDYHVTTSQHARQAEDENDREVEGGRGRGRNAKAARPAKKGKHAESKADREEARAAVRGGKGGKRKGSSLQQGFQKPAQAVNRDVVIGETITVGELANKMAVKGSQVIKAMMKLGAMVTINQVIDQETAQLVAEEMGHKVILRRENELEEAVMSDRDTGAAAEPRAPVVTIMGHVDHGKTSLLDYIRSTKVASGEAGGITQHIGAYHVETDNGMITFLDTPGHAAFTSMRARGAQATDIVVLVVAADDGVMPQTIEAIQHAKAAGVPVVVAVNKIDKPEADPDRVKNELSQYGILPEEWGGESQFVHVSAKAGTGIDELLDAILLQAEVLELKAVRKGMASGAVIESFLDKGRGPVATVLVREGTLHKGDIVLCGFEYGRVRAMRNELGQEVLEAGPSIPVEILGLSGVPAAGDEVTVVRDEKKAREVALYRQGKFREVKLARQQKSKLENMFANMTEGEVHEVNIVLKADVQGSVEAISDSLLKLSTDEVKVKIIGSGVGGITETDATLAAASNAILVGFNVRADASARKVIEFESLDLRYYSVIYNLIDEVKAAMSGMLSPELKQQIIGLAEVRDVFKSPKFGAIAGCMVTEGTIKRHNPIRVLRDNVVIYEGELESLRRFKDDVNEVRNGMECGIGVKNYNDVRVGDMIEVFEIIEIQRTIA</sequence>
<comment type="function">
    <text evidence="2">One of the essential components for the initiation of protein synthesis. Protects formylmethionyl-tRNA from spontaneous hydrolysis and promotes its binding to the 30S ribosomal subunits. Also involved in the hydrolysis of GTP during the formation of the 70S ribosomal complex.</text>
</comment>
<comment type="subcellular location">
    <subcellularLocation>
        <location evidence="2">Cytoplasm</location>
    </subcellularLocation>
</comment>
<comment type="similarity">
    <text evidence="2">Belongs to the TRAFAC class translation factor GTPase superfamily. Classic translation factor GTPase family. IF-2 subfamily.</text>
</comment>
<dbReference type="EMBL" id="CP000026">
    <property type="protein sequence ID" value="AAV78981.1"/>
    <property type="molecule type" value="Genomic_DNA"/>
</dbReference>
<dbReference type="RefSeq" id="WP_000131177.1">
    <property type="nucleotide sequence ID" value="NC_006511.1"/>
</dbReference>
<dbReference type="SMR" id="Q5PLB0"/>
<dbReference type="KEGG" id="spt:SPA3154"/>
<dbReference type="HOGENOM" id="CLU_006301_6_3_6"/>
<dbReference type="Proteomes" id="UP000008185">
    <property type="component" value="Chromosome"/>
</dbReference>
<dbReference type="GO" id="GO:0005829">
    <property type="term" value="C:cytosol"/>
    <property type="evidence" value="ECO:0007669"/>
    <property type="project" value="TreeGrafter"/>
</dbReference>
<dbReference type="GO" id="GO:0005525">
    <property type="term" value="F:GTP binding"/>
    <property type="evidence" value="ECO:0007669"/>
    <property type="project" value="UniProtKB-KW"/>
</dbReference>
<dbReference type="GO" id="GO:0003924">
    <property type="term" value="F:GTPase activity"/>
    <property type="evidence" value="ECO:0007669"/>
    <property type="project" value="UniProtKB-UniRule"/>
</dbReference>
<dbReference type="GO" id="GO:0097216">
    <property type="term" value="F:guanosine tetraphosphate binding"/>
    <property type="evidence" value="ECO:0007669"/>
    <property type="project" value="UniProtKB-ARBA"/>
</dbReference>
<dbReference type="GO" id="GO:0003743">
    <property type="term" value="F:translation initiation factor activity"/>
    <property type="evidence" value="ECO:0007669"/>
    <property type="project" value="UniProtKB-UniRule"/>
</dbReference>
<dbReference type="CDD" id="cd01887">
    <property type="entry name" value="IF2_eIF5B"/>
    <property type="match status" value="1"/>
</dbReference>
<dbReference type="CDD" id="cd03702">
    <property type="entry name" value="IF2_mtIF2_II"/>
    <property type="match status" value="1"/>
</dbReference>
<dbReference type="CDD" id="cd03692">
    <property type="entry name" value="mtIF2_IVc"/>
    <property type="match status" value="1"/>
</dbReference>
<dbReference type="FunFam" id="2.40.30.10:FF:000007">
    <property type="entry name" value="Translation initiation factor IF-2"/>
    <property type="match status" value="1"/>
</dbReference>
<dbReference type="FunFam" id="2.40.30.10:FF:000008">
    <property type="entry name" value="Translation initiation factor IF-2"/>
    <property type="match status" value="1"/>
</dbReference>
<dbReference type="FunFam" id="3.30.56.50:FF:000001">
    <property type="entry name" value="Translation initiation factor IF-2"/>
    <property type="match status" value="1"/>
</dbReference>
<dbReference type="FunFam" id="3.40.50.10050:FF:000001">
    <property type="entry name" value="Translation initiation factor IF-2"/>
    <property type="match status" value="1"/>
</dbReference>
<dbReference type="FunFam" id="3.40.50.300:FF:000019">
    <property type="entry name" value="Translation initiation factor IF-2"/>
    <property type="match status" value="1"/>
</dbReference>
<dbReference type="Gene3D" id="3.40.50.300">
    <property type="entry name" value="P-loop containing nucleotide triphosphate hydrolases"/>
    <property type="match status" value="1"/>
</dbReference>
<dbReference type="Gene3D" id="3.30.56.50">
    <property type="entry name" value="Putative DNA-binding domain, N-terminal subdomain of bacterial translation initiation factor IF2"/>
    <property type="match status" value="1"/>
</dbReference>
<dbReference type="Gene3D" id="2.40.30.10">
    <property type="entry name" value="Translation factors"/>
    <property type="match status" value="2"/>
</dbReference>
<dbReference type="Gene3D" id="3.40.50.10050">
    <property type="entry name" value="Translation initiation factor IF- 2, domain 3"/>
    <property type="match status" value="1"/>
</dbReference>
<dbReference type="HAMAP" id="MF_00100_B">
    <property type="entry name" value="IF_2_B"/>
    <property type="match status" value="1"/>
</dbReference>
<dbReference type="InterPro" id="IPR009061">
    <property type="entry name" value="DNA-bd_dom_put_sf"/>
</dbReference>
<dbReference type="InterPro" id="IPR053905">
    <property type="entry name" value="EF-G-like_DII"/>
</dbReference>
<dbReference type="InterPro" id="IPR004161">
    <property type="entry name" value="EFTu-like_2"/>
</dbReference>
<dbReference type="InterPro" id="IPR013575">
    <property type="entry name" value="IF2_assoc_dom_bac"/>
</dbReference>
<dbReference type="InterPro" id="IPR044145">
    <property type="entry name" value="IF2_II"/>
</dbReference>
<dbReference type="InterPro" id="IPR006847">
    <property type="entry name" value="IF2_N"/>
</dbReference>
<dbReference type="InterPro" id="IPR027417">
    <property type="entry name" value="P-loop_NTPase"/>
</dbReference>
<dbReference type="InterPro" id="IPR005225">
    <property type="entry name" value="Small_GTP-bd"/>
</dbReference>
<dbReference type="InterPro" id="IPR000795">
    <property type="entry name" value="T_Tr_GTP-bd_dom"/>
</dbReference>
<dbReference type="InterPro" id="IPR000178">
    <property type="entry name" value="TF_IF2_bacterial-like"/>
</dbReference>
<dbReference type="InterPro" id="IPR015760">
    <property type="entry name" value="TIF_IF2"/>
</dbReference>
<dbReference type="InterPro" id="IPR023115">
    <property type="entry name" value="TIF_IF2_dom3"/>
</dbReference>
<dbReference type="InterPro" id="IPR036925">
    <property type="entry name" value="TIF_IF2_dom3_sf"/>
</dbReference>
<dbReference type="InterPro" id="IPR009000">
    <property type="entry name" value="Transl_B-barrel_sf"/>
</dbReference>
<dbReference type="NCBIfam" id="TIGR00487">
    <property type="entry name" value="IF-2"/>
    <property type="match status" value="1"/>
</dbReference>
<dbReference type="NCBIfam" id="TIGR00231">
    <property type="entry name" value="small_GTP"/>
    <property type="match status" value="1"/>
</dbReference>
<dbReference type="PANTHER" id="PTHR43381:SF5">
    <property type="entry name" value="TR-TYPE G DOMAIN-CONTAINING PROTEIN"/>
    <property type="match status" value="1"/>
</dbReference>
<dbReference type="PANTHER" id="PTHR43381">
    <property type="entry name" value="TRANSLATION INITIATION FACTOR IF-2-RELATED"/>
    <property type="match status" value="1"/>
</dbReference>
<dbReference type="Pfam" id="PF22042">
    <property type="entry name" value="EF-G_D2"/>
    <property type="match status" value="1"/>
</dbReference>
<dbReference type="Pfam" id="PF00009">
    <property type="entry name" value="GTP_EFTU"/>
    <property type="match status" value="1"/>
</dbReference>
<dbReference type="Pfam" id="PF03144">
    <property type="entry name" value="GTP_EFTU_D2"/>
    <property type="match status" value="1"/>
</dbReference>
<dbReference type="Pfam" id="PF11987">
    <property type="entry name" value="IF-2"/>
    <property type="match status" value="1"/>
</dbReference>
<dbReference type="Pfam" id="PF08364">
    <property type="entry name" value="IF2_assoc"/>
    <property type="match status" value="1"/>
</dbReference>
<dbReference type="Pfam" id="PF04760">
    <property type="entry name" value="IF2_N"/>
    <property type="match status" value="2"/>
</dbReference>
<dbReference type="SUPFAM" id="SSF52156">
    <property type="entry name" value="Initiation factor IF2/eIF5b, domain 3"/>
    <property type="match status" value="1"/>
</dbReference>
<dbReference type="SUPFAM" id="SSF52540">
    <property type="entry name" value="P-loop containing nucleoside triphosphate hydrolases"/>
    <property type="match status" value="1"/>
</dbReference>
<dbReference type="SUPFAM" id="SSF46955">
    <property type="entry name" value="Putative DNA-binding domain"/>
    <property type="match status" value="1"/>
</dbReference>
<dbReference type="SUPFAM" id="SSF50447">
    <property type="entry name" value="Translation proteins"/>
    <property type="match status" value="2"/>
</dbReference>
<dbReference type="PROSITE" id="PS51722">
    <property type="entry name" value="G_TR_2"/>
    <property type="match status" value="1"/>
</dbReference>
<dbReference type="PROSITE" id="PS01176">
    <property type="entry name" value="IF2"/>
    <property type="match status" value="1"/>
</dbReference>
<proteinExistence type="inferred from homology"/>
<feature type="chain" id="PRO_0000228240" description="Translation initiation factor IF-2">
    <location>
        <begin position="1"/>
        <end position="892"/>
    </location>
</feature>
<feature type="domain" description="tr-type G">
    <location>
        <begin position="391"/>
        <end position="560"/>
    </location>
</feature>
<feature type="region of interest" description="Disordered" evidence="3">
    <location>
        <begin position="88"/>
        <end position="305"/>
    </location>
</feature>
<feature type="region of interest" description="G1" evidence="1">
    <location>
        <begin position="400"/>
        <end position="407"/>
    </location>
</feature>
<feature type="region of interest" description="G2" evidence="1">
    <location>
        <begin position="425"/>
        <end position="429"/>
    </location>
</feature>
<feature type="region of interest" description="G3" evidence="1">
    <location>
        <begin position="446"/>
        <end position="449"/>
    </location>
</feature>
<feature type="region of interest" description="G4" evidence="1">
    <location>
        <begin position="500"/>
        <end position="503"/>
    </location>
</feature>
<feature type="region of interest" description="G5" evidence="1">
    <location>
        <begin position="536"/>
        <end position="538"/>
    </location>
</feature>
<feature type="compositionally biased region" description="Basic and acidic residues" evidence="3">
    <location>
        <begin position="93"/>
        <end position="159"/>
    </location>
</feature>
<feature type="compositionally biased region" description="Basic and acidic residues" evidence="3">
    <location>
        <begin position="166"/>
        <end position="216"/>
    </location>
</feature>
<feature type="compositionally biased region" description="Basic residues" evidence="3">
    <location>
        <begin position="254"/>
        <end position="269"/>
    </location>
</feature>
<feature type="compositionally biased region" description="Basic and acidic residues" evidence="3">
    <location>
        <begin position="270"/>
        <end position="282"/>
    </location>
</feature>
<feature type="binding site" evidence="2">
    <location>
        <begin position="400"/>
        <end position="407"/>
    </location>
    <ligand>
        <name>GTP</name>
        <dbReference type="ChEBI" id="CHEBI:37565"/>
    </ligand>
</feature>
<feature type="binding site" evidence="2">
    <location>
        <begin position="446"/>
        <end position="450"/>
    </location>
    <ligand>
        <name>GTP</name>
        <dbReference type="ChEBI" id="CHEBI:37565"/>
    </ligand>
</feature>
<feature type="binding site" evidence="2">
    <location>
        <begin position="500"/>
        <end position="503"/>
    </location>
    <ligand>
        <name>GTP</name>
        <dbReference type="ChEBI" id="CHEBI:37565"/>
    </ligand>
</feature>
<evidence type="ECO:0000250" key="1"/>
<evidence type="ECO:0000255" key="2">
    <source>
        <dbReference type="HAMAP-Rule" id="MF_00100"/>
    </source>
</evidence>
<evidence type="ECO:0000256" key="3">
    <source>
        <dbReference type="SAM" id="MobiDB-lite"/>
    </source>
</evidence>